<keyword id="KW-0249">Electron transport</keyword>
<keyword id="KW-0472">Membrane</keyword>
<keyword id="KW-0496">Mitochondrion</keyword>
<keyword id="KW-0999">Mitochondrion inner membrane</keyword>
<keyword id="KW-0520">NAD</keyword>
<keyword id="KW-0679">Respiratory chain</keyword>
<keyword id="KW-1278">Translocase</keyword>
<keyword id="KW-0812">Transmembrane</keyword>
<keyword id="KW-1133">Transmembrane helix</keyword>
<keyword id="KW-0813">Transport</keyword>
<keyword id="KW-0830">Ubiquinone</keyword>
<gene>
    <name type="primary">ND5</name>
</gene>
<comment type="function">
    <text evidence="1">Core subunit of the mitochondrial membrane respiratory chain NADH dehydrogenase (Complex I) that is believed to belong to the minimal assembly required for catalysis. Complex I functions in the transfer of electrons from NADH to the respiratory chain. The immediate electron acceptor for the enzyme is believed to be ubiquinone (By similarity).</text>
</comment>
<comment type="catalytic activity">
    <reaction>
        <text>a ubiquinone + NADH + 5 H(+)(in) = a ubiquinol + NAD(+) + 4 H(+)(out)</text>
        <dbReference type="Rhea" id="RHEA:29091"/>
        <dbReference type="Rhea" id="RHEA-COMP:9565"/>
        <dbReference type="Rhea" id="RHEA-COMP:9566"/>
        <dbReference type="ChEBI" id="CHEBI:15378"/>
        <dbReference type="ChEBI" id="CHEBI:16389"/>
        <dbReference type="ChEBI" id="CHEBI:17976"/>
        <dbReference type="ChEBI" id="CHEBI:57540"/>
        <dbReference type="ChEBI" id="CHEBI:57945"/>
        <dbReference type="EC" id="7.1.1.2"/>
    </reaction>
</comment>
<comment type="subcellular location">
    <subcellularLocation>
        <location evidence="1">Mitochondrion inner membrane</location>
        <topology evidence="1">Multi-pass membrane protein</topology>
    </subcellularLocation>
</comment>
<comment type="similarity">
    <text evidence="3">Belongs to the complex I subunit 5 family.</text>
</comment>
<protein>
    <recommendedName>
        <fullName>NADH-ubiquinone oxidoreductase chain 5</fullName>
        <ecNumber>7.1.1.2</ecNumber>
    </recommendedName>
    <alternativeName>
        <fullName>NADH dehydrogenase subunit 5</fullName>
    </alternativeName>
</protein>
<dbReference type="EC" id="7.1.1.2"/>
<dbReference type="EMBL" id="U24570">
    <property type="protein sequence ID" value="AAC46871.1"/>
    <property type="molecule type" value="Genomic_DNA"/>
</dbReference>
<dbReference type="PIR" id="S58992">
    <property type="entry name" value="S58992"/>
</dbReference>
<dbReference type="RefSeq" id="NP_008245.1">
    <property type="nucleotide sequence ID" value="NC_001673.1"/>
</dbReference>
<dbReference type="SMR" id="Q34947"/>
<dbReference type="GeneID" id="807915"/>
<dbReference type="CTD" id="4540"/>
<dbReference type="GO" id="GO:0005743">
    <property type="term" value="C:mitochondrial inner membrane"/>
    <property type="evidence" value="ECO:0007669"/>
    <property type="project" value="UniProtKB-SubCell"/>
</dbReference>
<dbReference type="GO" id="GO:0008137">
    <property type="term" value="F:NADH dehydrogenase (ubiquinone) activity"/>
    <property type="evidence" value="ECO:0007669"/>
    <property type="project" value="UniProtKB-EC"/>
</dbReference>
<dbReference type="GO" id="GO:0042773">
    <property type="term" value="P:ATP synthesis coupled electron transport"/>
    <property type="evidence" value="ECO:0007669"/>
    <property type="project" value="InterPro"/>
</dbReference>
<dbReference type="GO" id="GO:0015990">
    <property type="term" value="P:electron transport coupled proton transport"/>
    <property type="evidence" value="ECO:0007669"/>
    <property type="project" value="TreeGrafter"/>
</dbReference>
<dbReference type="InterPro" id="IPR010934">
    <property type="entry name" value="NADH_DH_su5_C"/>
</dbReference>
<dbReference type="InterPro" id="IPR001750">
    <property type="entry name" value="ND/Mrp_TM"/>
</dbReference>
<dbReference type="InterPro" id="IPR003945">
    <property type="entry name" value="NU5C-like"/>
</dbReference>
<dbReference type="InterPro" id="IPR001516">
    <property type="entry name" value="Proton_antipo_N"/>
</dbReference>
<dbReference type="PANTHER" id="PTHR42829">
    <property type="entry name" value="NADH-UBIQUINONE OXIDOREDUCTASE CHAIN 5"/>
    <property type="match status" value="1"/>
</dbReference>
<dbReference type="PANTHER" id="PTHR42829:SF2">
    <property type="entry name" value="NADH-UBIQUINONE OXIDOREDUCTASE CHAIN 5"/>
    <property type="match status" value="1"/>
</dbReference>
<dbReference type="Pfam" id="PF06455">
    <property type="entry name" value="NADH5_C"/>
    <property type="match status" value="1"/>
</dbReference>
<dbReference type="Pfam" id="PF00361">
    <property type="entry name" value="Proton_antipo_M"/>
    <property type="match status" value="1"/>
</dbReference>
<dbReference type="Pfam" id="PF00662">
    <property type="entry name" value="Proton_antipo_N"/>
    <property type="match status" value="1"/>
</dbReference>
<dbReference type="PRINTS" id="PR01434">
    <property type="entry name" value="NADHDHGNASE5"/>
</dbReference>
<evidence type="ECO:0000250" key="1"/>
<evidence type="ECO:0000255" key="2"/>
<evidence type="ECO:0000305" key="3"/>
<sequence length="574" mass="64325">MLRMFNTSLVASKLMWVIFTGMLAPTLYMVHCNSTLLLEWNLFSISSTPMMMTIILDPLGLMFSCTVVMISANILKFSTIYMKEDKFINRFTVLVLLFVLSMNMLIFFPHLIILLLGWDGLGIVSFILVIYYQNPKSLAAGMITALTNRIGDVMLLLAIAWTLNQGHWNILHMWAVDENMYQALVIIIAAMTKSAQMPFSSWLPAAMAAPTPVSALVHSSTLVTAGVFLLIRFYNFLSSVWWFTTFLLFVAVSTTLMAGLSASSECDMKKIIALSTLSQLGMMMAAMGLGMAHMAFFHMVTHAMFKALLFVCAGSFIHSHMHSQDLRWMGNLTKQMPTTTSCLIMANLALCGFPFMSGFYSKDMIVEASLYYPHNSLMINLILFAVGLTAFYSTRFTMCVVLSPNNCGPYMHLEESNSLTSPMLLLASMSVISGSALTWILPLKQEMMMIPLDQKLKTLMLVTLGALMSWFFLTTTNMTKTCLYIRHPIINYFSCTMWFLVPLSSQFMMKLPMYVSHNYLKLTDQSWLELLGGQGINNVSSKASNIYLASLKSTPMNYLMMSSMLLLVATLVAI</sequence>
<name>NU5M_LUMTE</name>
<proteinExistence type="inferred from homology"/>
<feature type="chain" id="PRO_0000118108" description="NADH-ubiquinone oxidoreductase chain 5">
    <location>
        <begin position="1"/>
        <end position="574"/>
    </location>
</feature>
<feature type="transmembrane region" description="Helical" evidence="2">
    <location>
        <begin position="10"/>
        <end position="30"/>
    </location>
</feature>
<feature type="transmembrane region" description="Helical" evidence="2">
    <location>
        <begin position="50"/>
        <end position="70"/>
    </location>
</feature>
<feature type="transmembrane region" description="Helical" evidence="2">
    <location>
        <begin position="87"/>
        <end position="107"/>
    </location>
</feature>
<feature type="transmembrane region" description="Helical" evidence="2">
    <location>
        <begin position="111"/>
        <end position="131"/>
    </location>
</feature>
<feature type="transmembrane region" description="Helical" evidence="2">
    <location>
        <begin position="141"/>
        <end position="161"/>
    </location>
</feature>
<feature type="transmembrane region" description="Helical" evidence="2">
    <location>
        <begin position="181"/>
        <end position="203"/>
    </location>
</feature>
<feature type="transmembrane region" description="Helical" evidence="2">
    <location>
        <begin position="211"/>
        <end position="231"/>
    </location>
</feature>
<feature type="transmembrane region" description="Helical" evidence="2">
    <location>
        <begin position="240"/>
        <end position="260"/>
    </location>
</feature>
<feature type="transmembrane region" description="Helical" evidence="2">
    <location>
        <begin position="280"/>
        <end position="300"/>
    </location>
</feature>
<feature type="transmembrane region" description="Helical" evidence="2">
    <location>
        <begin position="301"/>
        <end position="321"/>
    </location>
</feature>
<feature type="transmembrane region" description="Helical" evidence="2">
    <location>
        <begin position="340"/>
        <end position="360"/>
    </location>
</feature>
<feature type="transmembrane region" description="Helical" evidence="2">
    <location>
        <begin position="381"/>
        <end position="401"/>
    </location>
</feature>
<feature type="transmembrane region" description="Helical" evidence="2">
    <location>
        <begin position="423"/>
        <end position="443"/>
    </location>
</feature>
<feature type="transmembrane region" description="Helical" evidence="2">
    <location>
        <begin position="458"/>
        <end position="478"/>
    </location>
</feature>
<feature type="transmembrane region" description="Helical" evidence="2">
    <location>
        <begin position="489"/>
        <end position="509"/>
    </location>
</feature>
<feature type="transmembrane region" description="Helical" evidence="2">
    <location>
        <begin position="554"/>
        <end position="574"/>
    </location>
</feature>
<geneLocation type="mitochondrion"/>
<accession>Q34947</accession>
<organism>
    <name type="scientific">Lumbricus terrestris</name>
    <name type="common">Common earthworm</name>
    <dbReference type="NCBI Taxonomy" id="6398"/>
    <lineage>
        <taxon>Eukaryota</taxon>
        <taxon>Metazoa</taxon>
        <taxon>Spiralia</taxon>
        <taxon>Lophotrochozoa</taxon>
        <taxon>Annelida</taxon>
        <taxon>Clitellata</taxon>
        <taxon>Oligochaeta</taxon>
        <taxon>Crassiclitellata</taxon>
        <taxon>Lumbricina</taxon>
        <taxon>Lumbricidae</taxon>
        <taxon>Lumbricinae</taxon>
        <taxon>Lumbricus</taxon>
    </lineage>
</organism>
<reference key="1">
    <citation type="journal article" date="1995" name="Genetics">
        <title>Complete sequence of the mitochondrial DNA of the annelid worm Lumbricus terrestris.</title>
        <authorList>
            <person name="Boore J.L."/>
            <person name="Brown W.M."/>
        </authorList>
    </citation>
    <scope>NUCLEOTIDE SEQUENCE [GENOMIC DNA]</scope>
</reference>